<organism>
    <name type="scientific">Salinispora tropica (strain ATCC BAA-916 / DSM 44818 / JCM 13857 / NBRC 105044 / CNB-440)</name>
    <dbReference type="NCBI Taxonomy" id="369723"/>
    <lineage>
        <taxon>Bacteria</taxon>
        <taxon>Bacillati</taxon>
        <taxon>Actinomycetota</taxon>
        <taxon>Actinomycetes</taxon>
        <taxon>Micromonosporales</taxon>
        <taxon>Micromonosporaceae</taxon>
        <taxon>Salinispora</taxon>
    </lineage>
</organism>
<protein>
    <recommendedName>
        <fullName evidence="1">S-adenosylmethionine synthase</fullName>
        <shortName evidence="1">AdoMet synthase</shortName>
        <ecNumber evidence="1">2.5.1.6</ecNumber>
    </recommendedName>
    <alternativeName>
        <fullName evidence="1">MAT</fullName>
    </alternativeName>
    <alternativeName>
        <fullName evidence="1">Methionine adenosyltransferase</fullName>
    </alternativeName>
</protein>
<dbReference type="EC" id="2.5.1.6" evidence="1"/>
<dbReference type="EMBL" id="CP000667">
    <property type="protein sequence ID" value="ABP54326.1"/>
    <property type="molecule type" value="Genomic_DNA"/>
</dbReference>
<dbReference type="RefSeq" id="WP_011905756.1">
    <property type="nucleotide sequence ID" value="NC_009380.1"/>
</dbReference>
<dbReference type="SMR" id="A4X626"/>
<dbReference type="STRING" id="369723.Strop_1864"/>
<dbReference type="KEGG" id="stp:Strop_1864"/>
<dbReference type="PATRIC" id="fig|369723.5.peg.1912"/>
<dbReference type="eggNOG" id="COG0192">
    <property type="taxonomic scope" value="Bacteria"/>
</dbReference>
<dbReference type="HOGENOM" id="CLU_041802_1_1_11"/>
<dbReference type="UniPathway" id="UPA00315">
    <property type="reaction ID" value="UER00080"/>
</dbReference>
<dbReference type="Proteomes" id="UP000000235">
    <property type="component" value="Chromosome"/>
</dbReference>
<dbReference type="GO" id="GO:0005737">
    <property type="term" value="C:cytoplasm"/>
    <property type="evidence" value="ECO:0007669"/>
    <property type="project" value="UniProtKB-SubCell"/>
</dbReference>
<dbReference type="GO" id="GO:0005524">
    <property type="term" value="F:ATP binding"/>
    <property type="evidence" value="ECO:0007669"/>
    <property type="project" value="UniProtKB-UniRule"/>
</dbReference>
<dbReference type="GO" id="GO:0000287">
    <property type="term" value="F:magnesium ion binding"/>
    <property type="evidence" value="ECO:0007669"/>
    <property type="project" value="UniProtKB-UniRule"/>
</dbReference>
<dbReference type="GO" id="GO:0004478">
    <property type="term" value="F:methionine adenosyltransferase activity"/>
    <property type="evidence" value="ECO:0007669"/>
    <property type="project" value="UniProtKB-UniRule"/>
</dbReference>
<dbReference type="GO" id="GO:0006730">
    <property type="term" value="P:one-carbon metabolic process"/>
    <property type="evidence" value="ECO:0007669"/>
    <property type="project" value="UniProtKB-KW"/>
</dbReference>
<dbReference type="GO" id="GO:0006556">
    <property type="term" value="P:S-adenosylmethionine biosynthetic process"/>
    <property type="evidence" value="ECO:0007669"/>
    <property type="project" value="UniProtKB-UniRule"/>
</dbReference>
<dbReference type="CDD" id="cd18079">
    <property type="entry name" value="S-AdoMet_synt"/>
    <property type="match status" value="1"/>
</dbReference>
<dbReference type="FunFam" id="3.30.300.10:FF:000006">
    <property type="entry name" value="S-adenosylmethionine synthase"/>
    <property type="match status" value="1"/>
</dbReference>
<dbReference type="Gene3D" id="3.30.300.10">
    <property type="match status" value="3"/>
</dbReference>
<dbReference type="HAMAP" id="MF_00086">
    <property type="entry name" value="S_AdoMet_synth1"/>
    <property type="match status" value="1"/>
</dbReference>
<dbReference type="InterPro" id="IPR022631">
    <property type="entry name" value="ADOMET_SYNTHASE_CS"/>
</dbReference>
<dbReference type="InterPro" id="IPR022630">
    <property type="entry name" value="S-AdoMet_synt_C"/>
</dbReference>
<dbReference type="InterPro" id="IPR022629">
    <property type="entry name" value="S-AdoMet_synt_central"/>
</dbReference>
<dbReference type="InterPro" id="IPR022628">
    <property type="entry name" value="S-AdoMet_synt_N"/>
</dbReference>
<dbReference type="InterPro" id="IPR002133">
    <property type="entry name" value="S-AdoMet_synthetase"/>
</dbReference>
<dbReference type="InterPro" id="IPR022636">
    <property type="entry name" value="S-AdoMet_synthetase_sfam"/>
</dbReference>
<dbReference type="NCBIfam" id="TIGR01034">
    <property type="entry name" value="metK"/>
    <property type="match status" value="1"/>
</dbReference>
<dbReference type="PANTHER" id="PTHR11964">
    <property type="entry name" value="S-ADENOSYLMETHIONINE SYNTHETASE"/>
    <property type="match status" value="1"/>
</dbReference>
<dbReference type="Pfam" id="PF02773">
    <property type="entry name" value="S-AdoMet_synt_C"/>
    <property type="match status" value="1"/>
</dbReference>
<dbReference type="Pfam" id="PF02772">
    <property type="entry name" value="S-AdoMet_synt_M"/>
    <property type="match status" value="1"/>
</dbReference>
<dbReference type="Pfam" id="PF00438">
    <property type="entry name" value="S-AdoMet_synt_N"/>
    <property type="match status" value="1"/>
</dbReference>
<dbReference type="PIRSF" id="PIRSF000497">
    <property type="entry name" value="MAT"/>
    <property type="match status" value="1"/>
</dbReference>
<dbReference type="SUPFAM" id="SSF55973">
    <property type="entry name" value="S-adenosylmethionine synthetase"/>
    <property type="match status" value="3"/>
</dbReference>
<dbReference type="PROSITE" id="PS00376">
    <property type="entry name" value="ADOMET_SYNTHASE_1"/>
    <property type="match status" value="1"/>
</dbReference>
<dbReference type="PROSITE" id="PS00377">
    <property type="entry name" value="ADOMET_SYNTHASE_2"/>
    <property type="match status" value="1"/>
</dbReference>
<keyword id="KW-0067">ATP-binding</keyword>
<keyword id="KW-0963">Cytoplasm</keyword>
<keyword id="KW-0460">Magnesium</keyword>
<keyword id="KW-0479">Metal-binding</keyword>
<keyword id="KW-0547">Nucleotide-binding</keyword>
<keyword id="KW-0554">One-carbon metabolism</keyword>
<keyword id="KW-0630">Potassium</keyword>
<keyword id="KW-1185">Reference proteome</keyword>
<keyword id="KW-0808">Transferase</keyword>
<feature type="chain" id="PRO_1000075391" description="S-adenosylmethionine synthase">
    <location>
        <begin position="1"/>
        <end position="399"/>
    </location>
</feature>
<feature type="region of interest" description="Flexible loop" evidence="1">
    <location>
        <begin position="99"/>
        <end position="109"/>
    </location>
</feature>
<feature type="binding site" description="in other chain" evidence="1">
    <location>
        <position position="15"/>
    </location>
    <ligand>
        <name>ATP</name>
        <dbReference type="ChEBI" id="CHEBI:30616"/>
        <note>ligand shared between two neighboring subunits</note>
    </ligand>
</feature>
<feature type="binding site" evidence="1">
    <location>
        <position position="17"/>
    </location>
    <ligand>
        <name>Mg(2+)</name>
        <dbReference type="ChEBI" id="CHEBI:18420"/>
    </ligand>
</feature>
<feature type="binding site" evidence="1">
    <location>
        <position position="43"/>
    </location>
    <ligand>
        <name>K(+)</name>
        <dbReference type="ChEBI" id="CHEBI:29103"/>
    </ligand>
</feature>
<feature type="binding site" description="in other chain" evidence="1">
    <location>
        <position position="56"/>
    </location>
    <ligand>
        <name>L-methionine</name>
        <dbReference type="ChEBI" id="CHEBI:57844"/>
        <note>ligand shared between two neighboring subunits</note>
    </ligand>
</feature>
<feature type="binding site" description="in other chain" evidence="1">
    <location>
        <position position="99"/>
    </location>
    <ligand>
        <name>L-methionine</name>
        <dbReference type="ChEBI" id="CHEBI:57844"/>
        <note>ligand shared between two neighboring subunits</note>
    </ligand>
</feature>
<feature type="binding site" description="in other chain" evidence="1">
    <location>
        <begin position="174"/>
        <end position="176"/>
    </location>
    <ligand>
        <name>ATP</name>
        <dbReference type="ChEBI" id="CHEBI:30616"/>
        <note>ligand shared between two neighboring subunits</note>
    </ligand>
</feature>
<feature type="binding site" description="in other chain" evidence="1">
    <location>
        <begin position="244"/>
        <end position="245"/>
    </location>
    <ligand>
        <name>ATP</name>
        <dbReference type="ChEBI" id="CHEBI:30616"/>
        <note>ligand shared between two neighboring subunits</note>
    </ligand>
</feature>
<feature type="binding site" evidence="1">
    <location>
        <position position="253"/>
    </location>
    <ligand>
        <name>ATP</name>
        <dbReference type="ChEBI" id="CHEBI:30616"/>
        <note>ligand shared between two neighboring subunits</note>
    </ligand>
</feature>
<feature type="binding site" evidence="1">
    <location>
        <position position="253"/>
    </location>
    <ligand>
        <name>L-methionine</name>
        <dbReference type="ChEBI" id="CHEBI:57844"/>
        <note>ligand shared between two neighboring subunits</note>
    </ligand>
</feature>
<feature type="binding site" description="in other chain" evidence="1">
    <location>
        <begin position="259"/>
        <end position="260"/>
    </location>
    <ligand>
        <name>ATP</name>
        <dbReference type="ChEBI" id="CHEBI:30616"/>
        <note>ligand shared between two neighboring subunits</note>
    </ligand>
</feature>
<feature type="binding site" evidence="1">
    <location>
        <position position="276"/>
    </location>
    <ligand>
        <name>ATP</name>
        <dbReference type="ChEBI" id="CHEBI:30616"/>
        <note>ligand shared between two neighboring subunits</note>
    </ligand>
</feature>
<feature type="binding site" evidence="1">
    <location>
        <position position="280"/>
    </location>
    <ligand>
        <name>ATP</name>
        <dbReference type="ChEBI" id="CHEBI:30616"/>
        <note>ligand shared between two neighboring subunits</note>
    </ligand>
</feature>
<feature type="binding site" description="in other chain" evidence="1">
    <location>
        <position position="284"/>
    </location>
    <ligand>
        <name>L-methionine</name>
        <dbReference type="ChEBI" id="CHEBI:57844"/>
        <note>ligand shared between two neighboring subunits</note>
    </ligand>
</feature>
<reference key="1">
    <citation type="journal article" date="2007" name="Proc. Natl. Acad. Sci. U.S.A.">
        <title>Genome sequencing reveals complex secondary metabolome in the marine actinomycete Salinispora tropica.</title>
        <authorList>
            <person name="Udwary D.W."/>
            <person name="Zeigler L."/>
            <person name="Asolkar R.N."/>
            <person name="Singan V."/>
            <person name="Lapidus A."/>
            <person name="Fenical W."/>
            <person name="Jensen P.R."/>
            <person name="Moore B.S."/>
        </authorList>
    </citation>
    <scope>NUCLEOTIDE SEQUENCE [LARGE SCALE GENOMIC DNA]</scope>
    <source>
        <strain>ATCC BAA-916 / DSM 44818 / JCM 13857 / NBRC 105044 / CNB-440</strain>
    </source>
</reference>
<accession>A4X626</accession>
<evidence type="ECO:0000255" key="1">
    <source>
        <dbReference type="HAMAP-Rule" id="MF_00086"/>
    </source>
</evidence>
<name>METK_SALTO</name>
<gene>
    <name evidence="1" type="primary">metK</name>
    <name type="ordered locus">Strop_1864</name>
</gene>
<comment type="function">
    <text evidence="1">Catalyzes the formation of S-adenosylmethionine (AdoMet) from methionine and ATP. The overall synthetic reaction is composed of two sequential steps, AdoMet formation and the subsequent tripolyphosphate hydrolysis which occurs prior to release of AdoMet from the enzyme.</text>
</comment>
<comment type="catalytic activity">
    <reaction evidence="1">
        <text>L-methionine + ATP + H2O = S-adenosyl-L-methionine + phosphate + diphosphate</text>
        <dbReference type="Rhea" id="RHEA:21080"/>
        <dbReference type="ChEBI" id="CHEBI:15377"/>
        <dbReference type="ChEBI" id="CHEBI:30616"/>
        <dbReference type="ChEBI" id="CHEBI:33019"/>
        <dbReference type="ChEBI" id="CHEBI:43474"/>
        <dbReference type="ChEBI" id="CHEBI:57844"/>
        <dbReference type="ChEBI" id="CHEBI:59789"/>
        <dbReference type="EC" id="2.5.1.6"/>
    </reaction>
</comment>
<comment type="cofactor">
    <cofactor evidence="1">
        <name>Mg(2+)</name>
        <dbReference type="ChEBI" id="CHEBI:18420"/>
    </cofactor>
    <text evidence="1">Binds 2 divalent ions per subunit.</text>
</comment>
<comment type="cofactor">
    <cofactor evidence="1">
        <name>K(+)</name>
        <dbReference type="ChEBI" id="CHEBI:29103"/>
    </cofactor>
    <text evidence="1">Binds 1 potassium ion per subunit.</text>
</comment>
<comment type="pathway">
    <text evidence="1">Amino-acid biosynthesis; S-adenosyl-L-methionine biosynthesis; S-adenosyl-L-methionine from L-methionine: step 1/1.</text>
</comment>
<comment type="subunit">
    <text evidence="1">Homotetramer; dimer of dimers.</text>
</comment>
<comment type="subcellular location">
    <subcellularLocation>
        <location evidence="1">Cytoplasm</location>
    </subcellularLocation>
</comment>
<comment type="similarity">
    <text evidence="1">Belongs to the AdoMet synthase family.</text>
</comment>
<sequence length="399" mass="42760">MTRRLFTSESVTEGHPDKIADQISDGILDALLAEDPRSRVAVETLITTGQVHVAGEVTTQAYADIPSIVRRTILDIGYDSSRKGFDGASCGVSVSIGSQSADIAQGVDNAFELRTGASESALDAQGAGDQGMMFGFACSETPELMPMPIALAHRLSRRLAQVRREGVVPYLRPDGKTQVTVEYEGLRPVRLNTVLVSSQHAADVSLESLLTPDVREHVIAPEVEGLGLGLDVEDYRLLVNPTGRFEVGGPMGDAGLTGRKIIVDTYGGYARHGGGAFSGKDPSKVDRSAAYAMRWVAKNVVAAGLAERCEAQVAYAIGKAHPVSLFIETFGTETVPVERIEKAVTEVFDLRPAAIIRDLKLTRPIYSQTAAYGHFGRELPDFTWESTDRAADLKSVAGA</sequence>
<proteinExistence type="inferred from homology"/>